<name>PYRC5_PYRCO</name>
<feature type="chain" id="PRO_0000447191" description="Phenylcoumaran benzylic ether reductase Pyrc5">
    <location>
        <begin position="1"/>
        <end position="308"/>
    </location>
</feature>
<feature type="active site" description="Proton acceptor" evidence="1">
    <location>
        <position position="133"/>
    </location>
</feature>
<feature type="binding site" evidence="5">
    <location>
        <begin position="11"/>
        <end position="17"/>
    </location>
    <ligand>
        <name>NADP(+)</name>
        <dbReference type="ChEBI" id="CHEBI:58349"/>
    </ligand>
</feature>
<feature type="binding site" evidence="1">
    <location>
        <position position="36"/>
    </location>
    <ligand>
        <name>NADP(+)</name>
        <dbReference type="ChEBI" id="CHEBI:58349"/>
    </ligand>
</feature>
<feature type="binding site" evidence="1">
    <location>
        <position position="45"/>
    </location>
    <ligand>
        <name>NADP(+)</name>
        <dbReference type="ChEBI" id="CHEBI:58349"/>
    </ligand>
</feature>
<feature type="binding site" evidence="1">
    <location>
        <position position="137"/>
    </location>
    <ligand>
        <name>NADP(+)</name>
        <dbReference type="ChEBI" id="CHEBI:58349"/>
    </ligand>
</feature>
<keyword id="KW-0020">Allergen</keyword>
<keyword id="KW-0521">NADP</keyword>
<keyword id="KW-0560">Oxidoreductase</keyword>
<organism>
    <name type="scientific">Pyrus communis</name>
    <name type="common">Pear</name>
    <name type="synonym">Pyrus domestica</name>
    <dbReference type="NCBI Taxonomy" id="23211"/>
    <lineage>
        <taxon>Eukaryota</taxon>
        <taxon>Viridiplantae</taxon>
        <taxon>Streptophyta</taxon>
        <taxon>Embryophyta</taxon>
        <taxon>Tracheophyta</taxon>
        <taxon>Spermatophyta</taxon>
        <taxon>Magnoliopsida</taxon>
        <taxon>eudicotyledons</taxon>
        <taxon>Gunneridae</taxon>
        <taxon>Pentapetalae</taxon>
        <taxon>rosids</taxon>
        <taxon>fabids</taxon>
        <taxon>Rosales</taxon>
        <taxon>Rosaceae</taxon>
        <taxon>Amygdaloideae</taxon>
        <taxon>Maleae</taxon>
        <taxon>Pyrus</taxon>
    </lineage>
</organism>
<reference key="1">
    <citation type="journal article" date="2001" name="Eur. J. Biochem.">
        <title>Phenylcoumaran benzylic ether and isoflavonoid reductases are a new class of cross-reactive allergens in birch pollen, fruits and vegetables.</title>
        <authorList>
            <person name="Karamloo F."/>
            <person name="Wangorsch A."/>
            <person name="Kasahara H."/>
            <person name="Davin L.B."/>
            <person name="Haustein D."/>
            <person name="Lewis N.G."/>
            <person name="Vieths S."/>
        </authorList>
    </citation>
    <scope>NUCLEOTIDE SEQUENCE [MRNA]</scope>
    <scope>FUNCTION</scope>
    <scope>CATALYTIC ACTIVITY</scope>
    <scope>ALLERGEN</scope>
</reference>
<dbReference type="EC" id="1.23.1.-" evidence="2"/>
<dbReference type="EMBL" id="AF071477">
    <property type="protein sequence ID" value="AAC24001.1"/>
    <property type="molecule type" value="mRNA"/>
</dbReference>
<dbReference type="SMR" id="O81355"/>
<dbReference type="Allergome" id="3460">
    <property type="allergen name" value="Pyr c 5.0101"/>
</dbReference>
<dbReference type="Allergome" id="609">
    <property type="allergen name" value="Pyr c 5"/>
</dbReference>
<dbReference type="GO" id="GO:0032442">
    <property type="term" value="F:phenylcoumaran benzylic ether reductase activity"/>
    <property type="evidence" value="ECO:0000314"/>
    <property type="project" value="UniProtKB"/>
</dbReference>
<dbReference type="GO" id="GO:0009807">
    <property type="term" value="P:lignan biosynthetic process"/>
    <property type="evidence" value="ECO:0000314"/>
    <property type="project" value="UniProtKB"/>
</dbReference>
<dbReference type="CDD" id="cd05259">
    <property type="entry name" value="PCBER_SDR_a"/>
    <property type="match status" value="1"/>
</dbReference>
<dbReference type="Gene3D" id="3.40.50.720">
    <property type="entry name" value="NAD(P)-binding Rossmann-like Domain"/>
    <property type="match status" value="1"/>
</dbReference>
<dbReference type="Gene3D" id="3.90.25.10">
    <property type="entry name" value="UDP-galactose 4-epimerase, domain 1"/>
    <property type="match status" value="1"/>
</dbReference>
<dbReference type="InterPro" id="IPR036291">
    <property type="entry name" value="NAD(P)-bd_dom_sf"/>
</dbReference>
<dbReference type="InterPro" id="IPR008030">
    <property type="entry name" value="NmrA-like"/>
</dbReference>
<dbReference type="InterPro" id="IPR050608">
    <property type="entry name" value="NmrA-type/Isoflavone_red_sf"/>
</dbReference>
<dbReference type="InterPro" id="IPR045312">
    <property type="entry name" value="PCBER-like"/>
</dbReference>
<dbReference type="PANTHER" id="PTHR43349:SF35">
    <property type="entry name" value="PHENYLCOUMARAN BENZYLIC ETHER REDUCTASE 1"/>
    <property type="match status" value="1"/>
</dbReference>
<dbReference type="PANTHER" id="PTHR43349">
    <property type="entry name" value="PINORESINOL REDUCTASE-RELATED"/>
    <property type="match status" value="1"/>
</dbReference>
<dbReference type="Pfam" id="PF05368">
    <property type="entry name" value="NmrA"/>
    <property type="match status" value="1"/>
</dbReference>
<dbReference type="SUPFAM" id="SSF51735">
    <property type="entry name" value="NAD(P)-binding Rossmann-fold domains"/>
    <property type="match status" value="1"/>
</dbReference>
<accession>O81355</accession>
<protein>
    <recommendedName>
        <fullName evidence="4">Phenylcoumaran benzylic ether reductase Pyrc5</fullName>
        <ecNumber evidence="2">1.23.1.-</ecNumber>
    </recommendedName>
    <alternativeName>
        <fullName evidence="3">Minor fruit allergen Pyr c 5</fullName>
    </alternativeName>
    <allergenName evidence="3">Pyr c 5</allergenName>
</protein>
<gene>
    <name evidence="6" type="primary">PYRC5</name>
</gene>
<comment type="function">
    <text evidence="2">Oxidoreductase involved in lignan biosynthesis (PubMed:11606193). Catalyzes the NADPH-dependent reduction of phenylcoumaran benzylic ethers (PubMed:11606193). Converts dehydrodiconiferyl alcohol (DDC) to isodihydrodehydrodiconiferyl alcohol (IDDDC) (PubMed:11606193).</text>
</comment>
<comment type="catalytic activity">
    <reaction evidence="2">
        <text>(-)-dehydrodiconiferyl alcohol + NADPH + H(+) = (S)-isodihydrodehydrodiconiferyl alcohol + NADP(+)</text>
        <dbReference type="Rhea" id="RHEA:59440"/>
        <dbReference type="ChEBI" id="CHEBI:15378"/>
        <dbReference type="ChEBI" id="CHEBI:57783"/>
        <dbReference type="ChEBI" id="CHEBI:58349"/>
        <dbReference type="ChEBI" id="CHEBI:70467"/>
        <dbReference type="ChEBI" id="CHEBI:143259"/>
    </reaction>
</comment>
<comment type="catalytic activity">
    <reaction evidence="2">
        <text>(+)-dehydrodiconiferyl alcohol + NADPH + H(+) = (R)-isodihydrodehydrodiconiferyl alcohol + NADP(+)</text>
        <dbReference type="Rhea" id="RHEA:59844"/>
        <dbReference type="ChEBI" id="CHEBI:15378"/>
        <dbReference type="ChEBI" id="CHEBI:57783"/>
        <dbReference type="ChEBI" id="CHEBI:58349"/>
        <dbReference type="ChEBI" id="CHEBI:143256"/>
        <dbReference type="ChEBI" id="CHEBI:143260"/>
    </reaction>
</comment>
<comment type="allergen">
    <text evidence="2">May cause an allergic reaction in human (PubMed:11606193). Binds to IgE from patients allergic to pear fruit (PubMed:11606193). Induces histamine release from basophils of patient allergic to the pear fruit protein Pyr c 5 (PubMed:11606193). Exhibits cross-reactivity with IgE from patients allergic to other fruits, vegetables and birch pollen (PubMed:11606193). May be a minor allergen of pear fruit (PubMed:11606193).</text>
</comment>
<comment type="similarity">
    <text evidence="4">Belongs to the NmrA-type oxidoreductase family. Isoflavone reductase subfamily.</text>
</comment>
<sequence>MASKSQILFIGGTGYIGKFIVEASAKAGYPTYVLVREASLSDPAKSKVIENFKALGVNFVLGDLYDHESLVKAIKQVDVVISTVGHGQLADQGKIIAAIKEAGNVKRFFPSEFGNDVDRSHAVEPAKSAFETKAKIRRAVEAEGIPYTYVSSNFFAGYFLPTLNQPGASSAPRDKVVILGDGNPKAIFNKEDDIGTYTIRAVDDPRTLNKVLYIRPPANTISFNELVSLWEKKIGKTLERIYVPEEQLLKNIQEAAVPLNVILSISHAVFVKGDHTNFEIEPSFGVEATALYPDVKYTTVDEYLNQFV</sequence>
<proteinExistence type="evidence at protein level"/>
<evidence type="ECO:0000250" key="1">
    <source>
        <dbReference type="UniProtKB" id="Q9LD14"/>
    </source>
</evidence>
<evidence type="ECO:0000269" key="2">
    <source>
    </source>
</evidence>
<evidence type="ECO:0000303" key="3">
    <source>
    </source>
</evidence>
<evidence type="ECO:0000305" key="4"/>
<evidence type="ECO:0000305" key="5">
    <source>
    </source>
</evidence>
<evidence type="ECO:0000312" key="6">
    <source>
        <dbReference type="EMBL" id="AAC24001.1"/>
    </source>
</evidence>